<gene>
    <name type="primary">yncE</name>
    <name type="ordered locus">Z2267</name>
    <name type="ordered locus">ECs2056</name>
</gene>
<keyword id="KW-1185">Reference proteome</keyword>
<keyword id="KW-0732">Signal</keyword>
<evidence type="ECO:0000255" key="1"/>
<feature type="signal peptide" evidence="1">
    <location>
        <begin position="1"/>
        <end position="30"/>
    </location>
</feature>
<feature type="chain" id="PRO_0000013839" description="Uncharacterized protein YncE">
    <location>
        <begin position="31"/>
        <end position="353"/>
    </location>
</feature>
<proteinExistence type="inferred from homology"/>
<dbReference type="EMBL" id="AE005174">
    <property type="protein sequence ID" value="AAG56323.1"/>
    <property type="molecule type" value="Genomic_DNA"/>
</dbReference>
<dbReference type="EMBL" id="BA000007">
    <property type="protein sequence ID" value="BAB35479.1"/>
    <property type="molecule type" value="Genomic_DNA"/>
</dbReference>
<dbReference type="PIR" id="G85732">
    <property type="entry name" value="G85732"/>
</dbReference>
<dbReference type="PIR" id="H90885">
    <property type="entry name" value="H90885"/>
</dbReference>
<dbReference type="RefSeq" id="NP_310083.1">
    <property type="nucleotide sequence ID" value="NC_002695.1"/>
</dbReference>
<dbReference type="RefSeq" id="WP_000550626.1">
    <property type="nucleotide sequence ID" value="NZ_VOAI01000022.1"/>
</dbReference>
<dbReference type="SMR" id="Q8X9X2"/>
<dbReference type="STRING" id="155864.Z2267"/>
<dbReference type="GeneID" id="917255"/>
<dbReference type="KEGG" id="ece:Z2267"/>
<dbReference type="KEGG" id="ecs:ECs_2056"/>
<dbReference type="PATRIC" id="fig|386585.9.peg.2157"/>
<dbReference type="eggNOG" id="COG3391">
    <property type="taxonomic scope" value="Bacteria"/>
</dbReference>
<dbReference type="HOGENOM" id="CLU_056358_1_0_6"/>
<dbReference type="OMA" id="QDDGKEH"/>
<dbReference type="Proteomes" id="UP000000558">
    <property type="component" value="Chromosome"/>
</dbReference>
<dbReference type="Proteomes" id="UP000002519">
    <property type="component" value="Chromosome"/>
</dbReference>
<dbReference type="FunFam" id="2.130.10.10:FF:000423">
    <property type="entry name" value="YncE family protein"/>
    <property type="match status" value="1"/>
</dbReference>
<dbReference type="Gene3D" id="2.130.10.10">
    <property type="entry name" value="YVTN repeat-like/Quinoprotein amine dehydrogenase"/>
    <property type="match status" value="1"/>
</dbReference>
<dbReference type="InterPro" id="IPR011048">
    <property type="entry name" value="Haem_d1_sf"/>
</dbReference>
<dbReference type="InterPro" id="IPR051200">
    <property type="entry name" value="Host-pathogen_enzymatic-act"/>
</dbReference>
<dbReference type="InterPro" id="IPR015943">
    <property type="entry name" value="WD40/YVTN_repeat-like_dom_sf"/>
</dbReference>
<dbReference type="InterPro" id="IPR048433">
    <property type="entry name" value="YNCE-like_beta-prop"/>
</dbReference>
<dbReference type="PANTHER" id="PTHR47197:SF3">
    <property type="entry name" value="DIHYDRO-HEME D1 DEHYDROGENASE"/>
    <property type="match status" value="1"/>
</dbReference>
<dbReference type="PANTHER" id="PTHR47197">
    <property type="entry name" value="PROTEIN NIRF"/>
    <property type="match status" value="1"/>
</dbReference>
<dbReference type="Pfam" id="PF21783">
    <property type="entry name" value="YNCE"/>
    <property type="match status" value="1"/>
</dbReference>
<dbReference type="SUPFAM" id="SSF51004">
    <property type="entry name" value="C-terminal (heme d1) domain of cytochrome cd1-nitrite reductase"/>
    <property type="match status" value="1"/>
</dbReference>
<organism>
    <name type="scientific">Escherichia coli O157:H7</name>
    <dbReference type="NCBI Taxonomy" id="83334"/>
    <lineage>
        <taxon>Bacteria</taxon>
        <taxon>Pseudomonadati</taxon>
        <taxon>Pseudomonadota</taxon>
        <taxon>Gammaproteobacteria</taxon>
        <taxon>Enterobacterales</taxon>
        <taxon>Enterobacteriaceae</taxon>
        <taxon>Escherichia</taxon>
    </lineage>
</organism>
<name>YNCE_ECO57</name>
<protein>
    <recommendedName>
        <fullName>Uncharacterized protein YncE</fullName>
    </recommendedName>
</protein>
<reference key="1">
    <citation type="journal article" date="2001" name="Nature">
        <title>Genome sequence of enterohaemorrhagic Escherichia coli O157:H7.</title>
        <authorList>
            <person name="Perna N.T."/>
            <person name="Plunkett G. III"/>
            <person name="Burland V."/>
            <person name="Mau B."/>
            <person name="Glasner J.D."/>
            <person name="Rose D.J."/>
            <person name="Mayhew G.F."/>
            <person name="Evans P.S."/>
            <person name="Gregor J."/>
            <person name="Kirkpatrick H.A."/>
            <person name="Posfai G."/>
            <person name="Hackett J."/>
            <person name="Klink S."/>
            <person name="Boutin A."/>
            <person name="Shao Y."/>
            <person name="Miller L."/>
            <person name="Grotbeck E.J."/>
            <person name="Davis N.W."/>
            <person name="Lim A."/>
            <person name="Dimalanta E.T."/>
            <person name="Potamousis K."/>
            <person name="Apodaca J."/>
            <person name="Anantharaman T.S."/>
            <person name="Lin J."/>
            <person name="Yen G."/>
            <person name="Schwartz D.C."/>
            <person name="Welch R.A."/>
            <person name="Blattner F.R."/>
        </authorList>
    </citation>
    <scope>NUCLEOTIDE SEQUENCE [LARGE SCALE GENOMIC DNA]</scope>
    <source>
        <strain>O157:H7 / EDL933 / ATCC 700927 / EHEC</strain>
    </source>
</reference>
<reference key="2">
    <citation type="journal article" date="2001" name="DNA Res.">
        <title>Complete genome sequence of enterohemorrhagic Escherichia coli O157:H7 and genomic comparison with a laboratory strain K-12.</title>
        <authorList>
            <person name="Hayashi T."/>
            <person name="Makino K."/>
            <person name="Ohnishi M."/>
            <person name="Kurokawa K."/>
            <person name="Ishii K."/>
            <person name="Yokoyama K."/>
            <person name="Han C.-G."/>
            <person name="Ohtsubo E."/>
            <person name="Nakayama K."/>
            <person name="Murata T."/>
            <person name="Tanaka M."/>
            <person name="Tobe T."/>
            <person name="Iida T."/>
            <person name="Takami H."/>
            <person name="Honda T."/>
            <person name="Sasakawa C."/>
            <person name="Ogasawara N."/>
            <person name="Yasunaga T."/>
            <person name="Kuhara S."/>
            <person name="Shiba T."/>
            <person name="Hattori M."/>
            <person name="Shinagawa H."/>
        </authorList>
    </citation>
    <scope>NUCLEOTIDE SEQUENCE [LARGE SCALE GENOMIC DNA]</scope>
    <source>
        <strain>O157:H7 / Sakai / RIMD 0509952 / EHEC</strain>
    </source>
</reference>
<accession>Q8X9X2</accession>
<sequence>MHLRHLFSLRLRGSLLLGSLLVASSFSTQAAEEMLRKAVGKGAYEMAYSQQENALWLATSQSRKLDKGGVVYRLDPVTLEVTQAIHNDLKPFGATINNTTQTLWFGNTVNSAVTAIDAKTGEVKGRLVLDDRKRTEEVRPLQPRELVADDATNTVYISGIGKDSVIWVVDGENIKLKTAIQNTGKMSTGLALDSKGKRLYTTNADGELITIDTADNKILSRKKLLDDGKEHFFINISLDTARQRAFITDSKAAEVLVVDTRNGNILAKVAAPESLAVLFNPARNEAYVTHRQAGKVSVIDAKSYKVVKTFDTPTHPNSLALSADGKTLYVSVKQKSTKQQEATQPDDVIRIAL</sequence>